<sequence length="425" mass="48500">MDLQLPRGTRDILPEEVSKWHFLETEFKKVCENYQYEEIRTPVFEHTELFERGVGDSTDIVSKEMYTFQDKGGRSLTLRPEGTASVVRAFVEHKLYGEVSQPIKMYYNEPMFRYERPQGGRQRQFTQMGIEALGSDDPSIDVEVISLAMEFFRKIGLINIKLVINSLGDKESRLKHREALVAHFEPHIDEFCAECQVRLHKNPLRILDCKKDHDNPLIQSAPSILDFLNEESVAYFENVKKYLNALEIPFEIDSTMVRGLDYYNHTTFEIMSVEEGFGAKTTLCGGGRYHGLVREFGGPDTPGMGFGIGVERILLALEKADIKIPAKKPLEVYVITAQPEAELKAVTLVNKLRQNGISAEKDYLKRKFKAQLKDANRKNAVYTIILGEEELQTGNYQLKNMETGEQEAVSETTILEKLINTKGEN</sequence>
<gene>
    <name evidence="1" type="primary">hisS</name>
    <name type="ordered locus">LMOf2365_1539</name>
</gene>
<feature type="chain" id="PRO_0000136189" description="Histidine--tRNA ligase">
    <location>
        <begin position="1"/>
        <end position="425"/>
    </location>
</feature>
<reference key="1">
    <citation type="journal article" date="2004" name="Nucleic Acids Res.">
        <title>Whole genome comparisons of serotype 4b and 1/2a strains of the food-borne pathogen Listeria monocytogenes reveal new insights into the core genome components of this species.</title>
        <authorList>
            <person name="Nelson K.E."/>
            <person name="Fouts D.E."/>
            <person name="Mongodin E.F."/>
            <person name="Ravel J."/>
            <person name="DeBoy R.T."/>
            <person name="Kolonay J.F."/>
            <person name="Rasko D.A."/>
            <person name="Angiuoli S.V."/>
            <person name="Gill S.R."/>
            <person name="Paulsen I.T."/>
            <person name="Peterson J.D."/>
            <person name="White O."/>
            <person name="Nelson W.C."/>
            <person name="Nierman W.C."/>
            <person name="Beanan M.J."/>
            <person name="Brinkac L.M."/>
            <person name="Daugherty S.C."/>
            <person name="Dodson R.J."/>
            <person name="Durkin A.S."/>
            <person name="Madupu R."/>
            <person name="Haft D.H."/>
            <person name="Selengut J."/>
            <person name="Van Aken S.E."/>
            <person name="Khouri H.M."/>
            <person name="Fedorova N."/>
            <person name="Forberger H.A."/>
            <person name="Tran B."/>
            <person name="Kathariou S."/>
            <person name="Wonderling L.D."/>
            <person name="Uhlich G.A."/>
            <person name="Bayles D.O."/>
            <person name="Luchansky J.B."/>
            <person name="Fraser C.M."/>
        </authorList>
    </citation>
    <scope>NUCLEOTIDE SEQUENCE [LARGE SCALE GENOMIC DNA]</scope>
    <source>
        <strain>F2365</strain>
    </source>
</reference>
<dbReference type="EC" id="6.1.1.21" evidence="1"/>
<dbReference type="EMBL" id="AE017262">
    <property type="protein sequence ID" value="AAT04314.1"/>
    <property type="molecule type" value="Genomic_DNA"/>
</dbReference>
<dbReference type="RefSeq" id="WP_003726853.1">
    <property type="nucleotide sequence ID" value="NC_002973.6"/>
</dbReference>
<dbReference type="SMR" id="Q71ZF0"/>
<dbReference type="KEGG" id="lmf:LMOf2365_1539"/>
<dbReference type="HOGENOM" id="CLU_025113_1_1_9"/>
<dbReference type="GO" id="GO:0005737">
    <property type="term" value="C:cytoplasm"/>
    <property type="evidence" value="ECO:0007669"/>
    <property type="project" value="UniProtKB-SubCell"/>
</dbReference>
<dbReference type="GO" id="GO:0005524">
    <property type="term" value="F:ATP binding"/>
    <property type="evidence" value="ECO:0007669"/>
    <property type="project" value="UniProtKB-UniRule"/>
</dbReference>
<dbReference type="GO" id="GO:0140096">
    <property type="term" value="F:catalytic activity, acting on a protein"/>
    <property type="evidence" value="ECO:0007669"/>
    <property type="project" value="UniProtKB-ARBA"/>
</dbReference>
<dbReference type="GO" id="GO:0004821">
    <property type="term" value="F:histidine-tRNA ligase activity"/>
    <property type="evidence" value="ECO:0007669"/>
    <property type="project" value="UniProtKB-UniRule"/>
</dbReference>
<dbReference type="GO" id="GO:0016740">
    <property type="term" value="F:transferase activity"/>
    <property type="evidence" value="ECO:0007669"/>
    <property type="project" value="UniProtKB-ARBA"/>
</dbReference>
<dbReference type="GO" id="GO:0006427">
    <property type="term" value="P:histidyl-tRNA aminoacylation"/>
    <property type="evidence" value="ECO:0007669"/>
    <property type="project" value="UniProtKB-UniRule"/>
</dbReference>
<dbReference type="CDD" id="cd00773">
    <property type="entry name" value="HisRS-like_core"/>
    <property type="match status" value="1"/>
</dbReference>
<dbReference type="CDD" id="cd00859">
    <property type="entry name" value="HisRS_anticodon"/>
    <property type="match status" value="1"/>
</dbReference>
<dbReference type="FunFam" id="3.30.930.10:FF:000005">
    <property type="entry name" value="Histidine--tRNA ligase"/>
    <property type="match status" value="1"/>
</dbReference>
<dbReference type="Gene3D" id="3.40.50.800">
    <property type="entry name" value="Anticodon-binding domain"/>
    <property type="match status" value="1"/>
</dbReference>
<dbReference type="Gene3D" id="3.30.930.10">
    <property type="entry name" value="Bira Bifunctional Protein, Domain 2"/>
    <property type="match status" value="1"/>
</dbReference>
<dbReference type="HAMAP" id="MF_00127">
    <property type="entry name" value="His_tRNA_synth"/>
    <property type="match status" value="1"/>
</dbReference>
<dbReference type="InterPro" id="IPR006195">
    <property type="entry name" value="aa-tRNA-synth_II"/>
</dbReference>
<dbReference type="InterPro" id="IPR045864">
    <property type="entry name" value="aa-tRNA-synth_II/BPL/LPL"/>
</dbReference>
<dbReference type="InterPro" id="IPR004154">
    <property type="entry name" value="Anticodon-bd"/>
</dbReference>
<dbReference type="InterPro" id="IPR036621">
    <property type="entry name" value="Anticodon-bd_dom_sf"/>
</dbReference>
<dbReference type="InterPro" id="IPR015807">
    <property type="entry name" value="His-tRNA-ligase"/>
</dbReference>
<dbReference type="InterPro" id="IPR041715">
    <property type="entry name" value="HisRS-like_core"/>
</dbReference>
<dbReference type="InterPro" id="IPR004516">
    <property type="entry name" value="HisRS/HisZ"/>
</dbReference>
<dbReference type="InterPro" id="IPR033656">
    <property type="entry name" value="HisRS_anticodon"/>
</dbReference>
<dbReference type="NCBIfam" id="TIGR00442">
    <property type="entry name" value="hisS"/>
    <property type="match status" value="1"/>
</dbReference>
<dbReference type="PANTHER" id="PTHR43707:SF1">
    <property type="entry name" value="HISTIDINE--TRNA LIGASE, MITOCHONDRIAL-RELATED"/>
    <property type="match status" value="1"/>
</dbReference>
<dbReference type="PANTHER" id="PTHR43707">
    <property type="entry name" value="HISTIDYL-TRNA SYNTHETASE"/>
    <property type="match status" value="1"/>
</dbReference>
<dbReference type="Pfam" id="PF03129">
    <property type="entry name" value="HGTP_anticodon"/>
    <property type="match status" value="1"/>
</dbReference>
<dbReference type="Pfam" id="PF13393">
    <property type="entry name" value="tRNA-synt_His"/>
    <property type="match status" value="1"/>
</dbReference>
<dbReference type="PIRSF" id="PIRSF001549">
    <property type="entry name" value="His-tRNA_synth"/>
    <property type="match status" value="1"/>
</dbReference>
<dbReference type="SUPFAM" id="SSF52954">
    <property type="entry name" value="Class II aaRS ABD-related"/>
    <property type="match status" value="1"/>
</dbReference>
<dbReference type="SUPFAM" id="SSF55681">
    <property type="entry name" value="Class II aaRS and biotin synthetases"/>
    <property type="match status" value="1"/>
</dbReference>
<dbReference type="PROSITE" id="PS50862">
    <property type="entry name" value="AA_TRNA_LIGASE_II"/>
    <property type="match status" value="1"/>
</dbReference>
<name>SYH_LISMF</name>
<organism>
    <name type="scientific">Listeria monocytogenes serotype 4b (strain F2365)</name>
    <dbReference type="NCBI Taxonomy" id="265669"/>
    <lineage>
        <taxon>Bacteria</taxon>
        <taxon>Bacillati</taxon>
        <taxon>Bacillota</taxon>
        <taxon>Bacilli</taxon>
        <taxon>Bacillales</taxon>
        <taxon>Listeriaceae</taxon>
        <taxon>Listeria</taxon>
    </lineage>
</organism>
<accession>Q71ZF0</accession>
<protein>
    <recommendedName>
        <fullName evidence="1">Histidine--tRNA ligase</fullName>
        <ecNumber evidence="1">6.1.1.21</ecNumber>
    </recommendedName>
    <alternativeName>
        <fullName evidence="1">Histidyl-tRNA synthetase</fullName>
        <shortName evidence="1">HisRS</shortName>
    </alternativeName>
</protein>
<comment type="catalytic activity">
    <reaction evidence="1">
        <text>tRNA(His) + L-histidine + ATP = L-histidyl-tRNA(His) + AMP + diphosphate + H(+)</text>
        <dbReference type="Rhea" id="RHEA:17313"/>
        <dbReference type="Rhea" id="RHEA-COMP:9665"/>
        <dbReference type="Rhea" id="RHEA-COMP:9689"/>
        <dbReference type="ChEBI" id="CHEBI:15378"/>
        <dbReference type="ChEBI" id="CHEBI:30616"/>
        <dbReference type="ChEBI" id="CHEBI:33019"/>
        <dbReference type="ChEBI" id="CHEBI:57595"/>
        <dbReference type="ChEBI" id="CHEBI:78442"/>
        <dbReference type="ChEBI" id="CHEBI:78527"/>
        <dbReference type="ChEBI" id="CHEBI:456215"/>
        <dbReference type="EC" id="6.1.1.21"/>
    </reaction>
</comment>
<comment type="subunit">
    <text evidence="1">Homodimer.</text>
</comment>
<comment type="subcellular location">
    <subcellularLocation>
        <location evidence="1">Cytoplasm</location>
    </subcellularLocation>
</comment>
<comment type="similarity">
    <text evidence="1">Belongs to the class-II aminoacyl-tRNA synthetase family.</text>
</comment>
<keyword id="KW-0030">Aminoacyl-tRNA synthetase</keyword>
<keyword id="KW-0067">ATP-binding</keyword>
<keyword id="KW-0963">Cytoplasm</keyword>
<keyword id="KW-0436">Ligase</keyword>
<keyword id="KW-0547">Nucleotide-binding</keyword>
<keyword id="KW-0648">Protein biosynthesis</keyword>
<evidence type="ECO:0000255" key="1">
    <source>
        <dbReference type="HAMAP-Rule" id="MF_00127"/>
    </source>
</evidence>
<proteinExistence type="inferred from homology"/>